<protein>
    <recommendedName>
        <fullName evidence="1">Large ribosomal subunit protein bL20</fullName>
    </recommendedName>
    <alternativeName>
        <fullName evidence="2">50S ribosomal protein L20</fullName>
    </alternativeName>
</protein>
<name>RL20_PHEZH</name>
<feature type="chain" id="PRO_1000122351" description="Large ribosomal subunit protein bL20">
    <location>
        <begin position="1"/>
        <end position="118"/>
    </location>
</feature>
<gene>
    <name evidence="1" type="primary">rplT</name>
    <name type="ordered locus">PHZ_c2976</name>
</gene>
<organism>
    <name type="scientific">Phenylobacterium zucineum (strain HLK1)</name>
    <dbReference type="NCBI Taxonomy" id="450851"/>
    <lineage>
        <taxon>Bacteria</taxon>
        <taxon>Pseudomonadati</taxon>
        <taxon>Pseudomonadota</taxon>
        <taxon>Alphaproteobacteria</taxon>
        <taxon>Caulobacterales</taxon>
        <taxon>Caulobacteraceae</taxon>
        <taxon>Phenylobacterium</taxon>
    </lineage>
</organism>
<dbReference type="EMBL" id="CP000747">
    <property type="protein sequence ID" value="ACG79385.1"/>
    <property type="molecule type" value="Genomic_DNA"/>
</dbReference>
<dbReference type="RefSeq" id="WP_012523523.1">
    <property type="nucleotide sequence ID" value="NC_011144.1"/>
</dbReference>
<dbReference type="SMR" id="B4R9C5"/>
<dbReference type="STRING" id="450851.PHZ_c2976"/>
<dbReference type="KEGG" id="pzu:PHZ_c2976"/>
<dbReference type="eggNOG" id="COG0292">
    <property type="taxonomic scope" value="Bacteria"/>
</dbReference>
<dbReference type="HOGENOM" id="CLU_123265_0_1_5"/>
<dbReference type="OrthoDB" id="9808966at2"/>
<dbReference type="Proteomes" id="UP000001868">
    <property type="component" value="Chromosome"/>
</dbReference>
<dbReference type="GO" id="GO:1990904">
    <property type="term" value="C:ribonucleoprotein complex"/>
    <property type="evidence" value="ECO:0007669"/>
    <property type="project" value="UniProtKB-KW"/>
</dbReference>
<dbReference type="GO" id="GO:0005840">
    <property type="term" value="C:ribosome"/>
    <property type="evidence" value="ECO:0007669"/>
    <property type="project" value="UniProtKB-KW"/>
</dbReference>
<dbReference type="GO" id="GO:0019843">
    <property type="term" value="F:rRNA binding"/>
    <property type="evidence" value="ECO:0007669"/>
    <property type="project" value="UniProtKB-UniRule"/>
</dbReference>
<dbReference type="GO" id="GO:0003735">
    <property type="term" value="F:structural constituent of ribosome"/>
    <property type="evidence" value="ECO:0007669"/>
    <property type="project" value="InterPro"/>
</dbReference>
<dbReference type="GO" id="GO:0000027">
    <property type="term" value="P:ribosomal large subunit assembly"/>
    <property type="evidence" value="ECO:0007669"/>
    <property type="project" value="UniProtKB-UniRule"/>
</dbReference>
<dbReference type="GO" id="GO:0006412">
    <property type="term" value="P:translation"/>
    <property type="evidence" value="ECO:0007669"/>
    <property type="project" value="InterPro"/>
</dbReference>
<dbReference type="CDD" id="cd07026">
    <property type="entry name" value="Ribosomal_L20"/>
    <property type="match status" value="1"/>
</dbReference>
<dbReference type="FunFam" id="1.10.1900.20:FF:000001">
    <property type="entry name" value="50S ribosomal protein L20"/>
    <property type="match status" value="1"/>
</dbReference>
<dbReference type="Gene3D" id="6.10.160.10">
    <property type="match status" value="1"/>
</dbReference>
<dbReference type="Gene3D" id="1.10.1900.20">
    <property type="entry name" value="Ribosomal protein L20"/>
    <property type="match status" value="1"/>
</dbReference>
<dbReference type="HAMAP" id="MF_00382">
    <property type="entry name" value="Ribosomal_bL20"/>
    <property type="match status" value="1"/>
</dbReference>
<dbReference type="InterPro" id="IPR005813">
    <property type="entry name" value="Ribosomal_bL20"/>
</dbReference>
<dbReference type="InterPro" id="IPR049946">
    <property type="entry name" value="RIBOSOMAL_L20_CS"/>
</dbReference>
<dbReference type="InterPro" id="IPR035566">
    <property type="entry name" value="Ribosomal_protein_bL20_C"/>
</dbReference>
<dbReference type="NCBIfam" id="TIGR01032">
    <property type="entry name" value="rplT_bact"/>
    <property type="match status" value="1"/>
</dbReference>
<dbReference type="PANTHER" id="PTHR10986">
    <property type="entry name" value="39S RIBOSOMAL PROTEIN L20"/>
    <property type="match status" value="1"/>
</dbReference>
<dbReference type="Pfam" id="PF00453">
    <property type="entry name" value="Ribosomal_L20"/>
    <property type="match status" value="1"/>
</dbReference>
<dbReference type="PRINTS" id="PR00062">
    <property type="entry name" value="RIBOSOMALL20"/>
</dbReference>
<dbReference type="SUPFAM" id="SSF74731">
    <property type="entry name" value="Ribosomal protein L20"/>
    <property type="match status" value="1"/>
</dbReference>
<dbReference type="PROSITE" id="PS00937">
    <property type="entry name" value="RIBOSOMAL_L20"/>
    <property type="match status" value="1"/>
</dbReference>
<accession>B4R9C5</accession>
<sequence length="118" mass="13277">MARVKRGVVAHAKHKKVLEQAKGFYGRRKNTIRAAKAAVDKAGQYAYRDRKVRKRNFRSLWIQRINAAARLEGFTYSRFIFGLEKAGIEMDRKVLADIAGNDPAGFKAIADKVRAALA</sequence>
<evidence type="ECO:0000255" key="1">
    <source>
        <dbReference type="HAMAP-Rule" id="MF_00382"/>
    </source>
</evidence>
<evidence type="ECO:0000305" key="2"/>
<keyword id="KW-1185">Reference proteome</keyword>
<keyword id="KW-0687">Ribonucleoprotein</keyword>
<keyword id="KW-0689">Ribosomal protein</keyword>
<keyword id="KW-0694">RNA-binding</keyword>
<keyword id="KW-0699">rRNA-binding</keyword>
<proteinExistence type="inferred from homology"/>
<comment type="function">
    <text evidence="1">Binds directly to 23S ribosomal RNA and is necessary for the in vitro assembly process of the 50S ribosomal subunit. It is not involved in the protein synthesizing functions of that subunit.</text>
</comment>
<comment type="similarity">
    <text evidence="1">Belongs to the bacterial ribosomal protein bL20 family.</text>
</comment>
<reference key="1">
    <citation type="journal article" date="2008" name="BMC Genomics">
        <title>Complete genome of Phenylobacterium zucineum - a novel facultative intracellular bacterium isolated from human erythroleukemia cell line K562.</title>
        <authorList>
            <person name="Luo Y."/>
            <person name="Xu X."/>
            <person name="Ding Z."/>
            <person name="Liu Z."/>
            <person name="Zhang B."/>
            <person name="Yan Z."/>
            <person name="Sun J."/>
            <person name="Hu S."/>
            <person name="Hu X."/>
        </authorList>
    </citation>
    <scope>NUCLEOTIDE SEQUENCE [LARGE SCALE GENOMIC DNA]</scope>
    <source>
        <strain>HLK1</strain>
    </source>
</reference>